<comment type="function">
    <text evidence="1">Acts as a calcium sensor. CBL proteins interact with CIPK serine-threonine protein kinases. Binding of a CBL protein to the regulatory NAF domain of a CIPK protein lead to the activation of the kinase in a calcium-dependent manner (By similarity).</text>
</comment>
<comment type="subunit">
    <text evidence="1">Homodimer.</text>
</comment>
<comment type="subcellular location">
    <subcellularLocation>
        <location evidence="4">Vacuole</location>
        <location evidence="4">Aleurone grain membrane</location>
        <topology evidence="4">Lipid-anchor</topology>
    </subcellularLocation>
    <text evidence="6">Tonoplast.</text>
</comment>
<comment type="tissue specificity">
    <text evidence="4 5">Expressed in roots, shoots, culms and scutellum.</text>
</comment>
<comment type="induction">
    <text evidence="4 5">By salt and drought stresses, abscisic acid (ABA) and gibberellin.</text>
</comment>
<comment type="similarity">
    <text evidence="6">Belongs to the calcineurin regulatory subunit family.</text>
</comment>
<organism>
    <name type="scientific">Oryza sativa subsp. japonica</name>
    <name type="common">Rice</name>
    <dbReference type="NCBI Taxonomy" id="39947"/>
    <lineage>
        <taxon>Eukaryota</taxon>
        <taxon>Viridiplantae</taxon>
        <taxon>Streptophyta</taxon>
        <taxon>Embryophyta</taxon>
        <taxon>Tracheophyta</taxon>
        <taxon>Spermatophyta</taxon>
        <taxon>Magnoliopsida</taxon>
        <taxon>Liliopsida</taxon>
        <taxon>Poales</taxon>
        <taxon>Poaceae</taxon>
        <taxon>BOP clade</taxon>
        <taxon>Oryzoideae</taxon>
        <taxon>Oryzeae</taxon>
        <taxon>Oryzinae</taxon>
        <taxon>Oryza</taxon>
        <taxon>Oryza sativa</taxon>
    </lineage>
</organism>
<reference key="1">
    <citation type="journal article" date="2008" name="Gene">
        <title>Expression analysis of the calcineurin B-like gene family in rice (Oryza sativa L.) under environmental stresses.</title>
        <authorList>
            <person name="Gu Z."/>
            <person name="Ma B."/>
            <person name="Jiang Y."/>
            <person name="Chen Z."/>
            <person name="Su X."/>
            <person name="Zhang H."/>
        </authorList>
    </citation>
    <scope>NUCLEOTIDE SEQUENCE [MRNA]</scope>
    <scope>TISSUE SPECIFICITY</scope>
    <scope>INDUCTION</scope>
    <scope>GENE FAMILY</scope>
    <source>
        <strain>cv. Nipponbare</strain>
        <tissue>Seedling</tissue>
    </source>
</reference>
<reference key="2">
    <citation type="journal article" date="2003" name="Science">
        <title>In-depth view of structure, activity, and evolution of rice chromosome 10.</title>
        <authorList>
            <person name="Yu Y."/>
            <person name="Rambo T."/>
            <person name="Currie J."/>
            <person name="Saski C."/>
            <person name="Kim H.-R."/>
            <person name="Collura K."/>
            <person name="Thompson S."/>
            <person name="Simmons J."/>
            <person name="Yang T.-J."/>
            <person name="Nah G."/>
            <person name="Patel A.J."/>
            <person name="Thurmond S."/>
            <person name="Henry D."/>
            <person name="Oates R."/>
            <person name="Palmer M."/>
            <person name="Pries G."/>
            <person name="Gibson J."/>
            <person name="Anderson H."/>
            <person name="Paradkar M."/>
            <person name="Crane L."/>
            <person name="Dale J."/>
            <person name="Carver M.B."/>
            <person name="Wood T."/>
            <person name="Frisch D."/>
            <person name="Engler F."/>
            <person name="Soderlund C."/>
            <person name="Palmer L.E."/>
            <person name="Teytelman L."/>
            <person name="Nascimento L."/>
            <person name="De la Bastide M."/>
            <person name="Spiegel L."/>
            <person name="Ware D."/>
            <person name="O'Shaughnessy A."/>
            <person name="Dike S."/>
            <person name="Dedhia N."/>
            <person name="Preston R."/>
            <person name="Huang E."/>
            <person name="Ferraro K."/>
            <person name="Kuit K."/>
            <person name="Miller B."/>
            <person name="Zutavern T."/>
            <person name="Katzenberger F."/>
            <person name="Muller S."/>
            <person name="Balija V."/>
            <person name="Martienssen R.A."/>
            <person name="Stein L."/>
            <person name="Minx P."/>
            <person name="Johnson D."/>
            <person name="Cordum H."/>
            <person name="Mardis E."/>
            <person name="Cheng Z."/>
            <person name="Jiang J."/>
            <person name="Wilson R."/>
            <person name="McCombie W.R."/>
            <person name="Wing R.A."/>
            <person name="Yuan Q."/>
            <person name="Ouyang S."/>
            <person name="Liu J."/>
            <person name="Jones K.M."/>
            <person name="Gansberger K."/>
            <person name="Moffat K."/>
            <person name="Hill J."/>
            <person name="Tsitrin T."/>
            <person name="Overton L."/>
            <person name="Bera J."/>
            <person name="Kim M."/>
            <person name="Jin S."/>
            <person name="Tallon L."/>
            <person name="Ciecko A."/>
            <person name="Pai G."/>
            <person name="Van Aken S."/>
            <person name="Utterback T."/>
            <person name="Reidmuller S."/>
            <person name="Bormann J."/>
            <person name="Feldblyum T."/>
            <person name="Hsiao J."/>
            <person name="Zismann V."/>
            <person name="Blunt S."/>
            <person name="de Vazeille A.R."/>
            <person name="Shaffer T."/>
            <person name="Koo H."/>
            <person name="Suh B."/>
            <person name="Yang Q."/>
            <person name="Haas B."/>
            <person name="Peterson J."/>
            <person name="Pertea M."/>
            <person name="Volfovsky N."/>
            <person name="Wortman J."/>
            <person name="White O."/>
            <person name="Salzberg S.L."/>
            <person name="Fraser C.M."/>
            <person name="Buell C.R."/>
            <person name="Messing J."/>
            <person name="Song R."/>
            <person name="Fuks G."/>
            <person name="Llaca V."/>
            <person name="Kovchak S."/>
            <person name="Young S."/>
            <person name="Bowers J.E."/>
            <person name="Paterson A.H."/>
            <person name="Johns M.A."/>
            <person name="Mao L."/>
            <person name="Pan H."/>
            <person name="Dean R.A."/>
        </authorList>
    </citation>
    <scope>NUCLEOTIDE SEQUENCE [LARGE SCALE GENOMIC DNA]</scope>
    <source>
        <strain>cv. Nipponbare</strain>
    </source>
</reference>
<reference key="3">
    <citation type="journal article" date="2005" name="Nature">
        <title>The map-based sequence of the rice genome.</title>
        <authorList>
            <consortium name="International rice genome sequencing project (IRGSP)"/>
        </authorList>
    </citation>
    <scope>NUCLEOTIDE SEQUENCE [LARGE SCALE GENOMIC DNA]</scope>
    <source>
        <strain>cv. Nipponbare</strain>
    </source>
</reference>
<reference key="4">
    <citation type="journal article" date="2008" name="Nucleic Acids Res.">
        <title>The rice annotation project database (RAP-DB): 2008 update.</title>
        <authorList>
            <consortium name="The rice annotation project (RAP)"/>
        </authorList>
    </citation>
    <scope>GENOME REANNOTATION</scope>
    <source>
        <strain>cv. Nipponbare</strain>
    </source>
</reference>
<reference key="5">
    <citation type="journal article" date="2013" name="Rice">
        <title>Improvement of the Oryza sativa Nipponbare reference genome using next generation sequence and optical map data.</title>
        <authorList>
            <person name="Kawahara Y."/>
            <person name="de la Bastide M."/>
            <person name="Hamilton J.P."/>
            <person name="Kanamori H."/>
            <person name="McCombie W.R."/>
            <person name="Ouyang S."/>
            <person name="Schwartz D.C."/>
            <person name="Tanaka T."/>
            <person name="Wu J."/>
            <person name="Zhou S."/>
            <person name="Childs K.L."/>
            <person name="Davidson R.M."/>
            <person name="Lin H."/>
            <person name="Quesada-Ocampo L."/>
            <person name="Vaillancourt B."/>
            <person name="Sakai H."/>
            <person name="Lee S.S."/>
            <person name="Kim J."/>
            <person name="Numa H."/>
            <person name="Itoh T."/>
            <person name="Buell C.R."/>
            <person name="Matsumoto T."/>
        </authorList>
    </citation>
    <scope>GENOME REANNOTATION</scope>
    <source>
        <strain>cv. Nipponbare</strain>
    </source>
</reference>
<reference key="6">
    <citation type="journal article" date="2005" name="PLoS Biol.">
        <title>The genomes of Oryza sativa: a history of duplications.</title>
        <authorList>
            <person name="Yu J."/>
            <person name="Wang J."/>
            <person name="Lin W."/>
            <person name="Li S."/>
            <person name="Li H."/>
            <person name="Zhou J."/>
            <person name="Ni P."/>
            <person name="Dong W."/>
            <person name="Hu S."/>
            <person name="Zeng C."/>
            <person name="Zhang J."/>
            <person name="Zhang Y."/>
            <person name="Li R."/>
            <person name="Xu Z."/>
            <person name="Li S."/>
            <person name="Li X."/>
            <person name="Zheng H."/>
            <person name="Cong L."/>
            <person name="Lin L."/>
            <person name="Yin J."/>
            <person name="Geng J."/>
            <person name="Li G."/>
            <person name="Shi J."/>
            <person name="Liu J."/>
            <person name="Lv H."/>
            <person name="Li J."/>
            <person name="Wang J."/>
            <person name="Deng Y."/>
            <person name="Ran L."/>
            <person name="Shi X."/>
            <person name="Wang X."/>
            <person name="Wu Q."/>
            <person name="Li C."/>
            <person name="Ren X."/>
            <person name="Wang J."/>
            <person name="Wang X."/>
            <person name="Li D."/>
            <person name="Liu D."/>
            <person name="Zhang X."/>
            <person name="Ji Z."/>
            <person name="Zhao W."/>
            <person name="Sun Y."/>
            <person name="Zhang Z."/>
            <person name="Bao J."/>
            <person name="Han Y."/>
            <person name="Dong L."/>
            <person name="Ji J."/>
            <person name="Chen P."/>
            <person name="Wu S."/>
            <person name="Liu J."/>
            <person name="Xiao Y."/>
            <person name="Bu D."/>
            <person name="Tan J."/>
            <person name="Yang L."/>
            <person name="Ye C."/>
            <person name="Zhang J."/>
            <person name="Xu J."/>
            <person name="Zhou Y."/>
            <person name="Yu Y."/>
            <person name="Zhang B."/>
            <person name="Zhuang S."/>
            <person name="Wei H."/>
            <person name="Liu B."/>
            <person name="Lei M."/>
            <person name="Yu H."/>
            <person name="Li Y."/>
            <person name="Xu H."/>
            <person name="Wei S."/>
            <person name="He X."/>
            <person name="Fang L."/>
            <person name="Zhang Z."/>
            <person name="Zhang Y."/>
            <person name="Huang X."/>
            <person name="Su Z."/>
            <person name="Tong W."/>
            <person name="Li J."/>
            <person name="Tong Z."/>
            <person name="Li S."/>
            <person name="Ye J."/>
            <person name="Wang L."/>
            <person name="Fang L."/>
            <person name="Lei T."/>
            <person name="Chen C.-S."/>
            <person name="Chen H.-C."/>
            <person name="Xu Z."/>
            <person name="Li H."/>
            <person name="Huang H."/>
            <person name="Zhang F."/>
            <person name="Xu H."/>
            <person name="Li N."/>
            <person name="Zhao C."/>
            <person name="Li S."/>
            <person name="Dong L."/>
            <person name="Huang Y."/>
            <person name="Li L."/>
            <person name="Xi Y."/>
            <person name="Qi Q."/>
            <person name="Li W."/>
            <person name="Zhang B."/>
            <person name="Hu W."/>
            <person name="Zhang Y."/>
            <person name="Tian X."/>
            <person name="Jiao Y."/>
            <person name="Liang X."/>
            <person name="Jin J."/>
            <person name="Gao L."/>
            <person name="Zheng W."/>
            <person name="Hao B."/>
            <person name="Liu S.-M."/>
            <person name="Wang W."/>
            <person name="Yuan L."/>
            <person name="Cao M."/>
            <person name="McDermott J."/>
            <person name="Samudrala R."/>
            <person name="Wang J."/>
            <person name="Wong G.K.-S."/>
            <person name="Yang H."/>
        </authorList>
    </citation>
    <scope>NUCLEOTIDE SEQUENCE [LARGE SCALE GENOMIC DNA]</scope>
    <source>
        <strain>cv. Nipponbare</strain>
    </source>
</reference>
<reference key="7">
    <citation type="submission" date="2006-10" db="EMBL/GenBank/DDBJ databases">
        <title>Oryza sativa full length cDNA.</title>
        <authorList>
            <consortium name="The rice full-length cDNA consortium"/>
        </authorList>
    </citation>
    <scope>NUCLEOTIDE SEQUENCE [LARGE SCALE MRNA]</scope>
    <source>
        <strain>cv. Nipponbare</strain>
    </source>
</reference>
<reference key="8">
    <citation type="journal article" date="2004" name="Plant Physiol.">
        <title>Calcium sensors and their interacting protein kinases: genomics of the Arabidopsis and rice CBL-CIPK signaling networks.</title>
        <authorList>
            <person name="Kolukisaoglu U."/>
            <person name="Weinl S."/>
            <person name="Blazevic D."/>
            <person name="Batistic O."/>
            <person name="Kudla J."/>
        </authorList>
    </citation>
    <scope>GENE FAMILY</scope>
    <scope>NOMENCLATURE</scope>
</reference>
<reference key="9">
    <citation type="journal article" date="2005" name="Plant Physiol.">
        <title>A gibberellin-regulated calcineurin B in rice localizes to the tonoplast and is implicated in vacuole function.</title>
        <authorList>
            <person name="Hwang Y.-S."/>
            <person name="Bethke P.C."/>
            <person name="Cheong Y.H."/>
            <person name="Chang H.-S."/>
            <person name="Zhu T."/>
            <person name="Jones R.L."/>
        </authorList>
    </citation>
    <scope>SUBCELLULAR LOCATION</scope>
    <scope>TISSUE SPECIFICITY</scope>
    <scope>INDUCTION</scope>
    <scope>GENE FAMILY</scope>
</reference>
<accession>Q7XC27</accession>
<accession>B7F9Y6</accession>
<accession>Q0IVL4</accession>
<accession>Q3HRP6</accession>
<sequence>MGCFQSTARRPRPGYEDPVGLASETAFSVSEVEALFELFKSISGSVIDDGLINKEEFQLALFKNKRKENLFANRIFDLFDVKKRGVIDFGDFVRALNVFHPNIPMEEKIDFSFKLYDMDNTGFIERKEVKQMLIALLGESEMRLSDEIIETILDKTFSDADTNQDGRIDRTEWENFVSRNPSLLKIMTLPYLKDITTTFPSFVFNSEVDDLVT</sequence>
<dbReference type="EMBL" id="DQ201195">
    <property type="protein sequence ID" value="ABA54176.1"/>
    <property type="molecule type" value="mRNA"/>
</dbReference>
<dbReference type="EMBL" id="DP000086">
    <property type="protein sequence ID" value="AAP55048.2"/>
    <property type="molecule type" value="Genomic_DNA"/>
</dbReference>
<dbReference type="EMBL" id="AP008216">
    <property type="status" value="NOT_ANNOTATED_CDS"/>
    <property type="molecule type" value="Genomic_DNA"/>
</dbReference>
<dbReference type="EMBL" id="AP014966">
    <property type="protein sequence ID" value="BAT12098.1"/>
    <property type="molecule type" value="Genomic_DNA"/>
</dbReference>
<dbReference type="EMBL" id="CM000147">
    <property type="protein sequence ID" value="EEE51412.1"/>
    <property type="molecule type" value="Genomic_DNA"/>
</dbReference>
<dbReference type="EMBL" id="AK243065">
    <property type="protein sequence ID" value="BAH01434.1"/>
    <property type="molecule type" value="mRNA"/>
</dbReference>
<dbReference type="RefSeq" id="XP_015614268.1">
    <property type="nucleotide sequence ID" value="XM_015758782.1"/>
</dbReference>
<dbReference type="SMR" id="Q7XC27"/>
<dbReference type="FunCoup" id="Q7XC27">
    <property type="interactions" value="869"/>
</dbReference>
<dbReference type="STRING" id="39947.Q7XC27"/>
<dbReference type="PaxDb" id="39947-Q7XC27"/>
<dbReference type="EnsemblPlants" id="Os10t0564800-01">
    <property type="protein sequence ID" value="Os10t0564800-01"/>
    <property type="gene ID" value="Os10g0564800"/>
</dbReference>
<dbReference type="Gramene" id="Os10t0564800-01">
    <property type="protein sequence ID" value="Os10t0564800-01"/>
    <property type="gene ID" value="Os10g0564800"/>
</dbReference>
<dbReference type="eggNOG" id="KOG0034">
    <property type="taxonomic scope" value="Eukaryota"/>
</dbReference>
<dbReference type="HOGENOM" id="CLU_061288_21_0_1"/>
<dbReference type="InParanoid" id="Q7XC27"/>
<dbReference type="OMA" id="LAMFDCA"/>
<dbReference type="OrthoDB" id="191686at2759"/>
<dbReference type="Proteomes" id="UP000000763">
    <property type="component" value="Chromosome 10"/>
</dbReference>
<dbReference type="Proteomes" id="UP000007752">
    <property type="component" value="Chromosome 10"/>
</dbReference>
<dbReference type="Proteomes" id="UP000059680">
    <property type="component" value="Chromosome 10"/>
</dbReference>
<dbReference type="GO" id="GO:0032578">
    <property type="term" value="C:aleurone grain membrane"/>
    <property type="evidence" value="ECO:0007669"/>
    <property type="project" value="UniProtKB-SubCell"/>
</dbReference>
<dbReference type="GO" id="GO:0005773">
    <property type="term" value="C:vacuole"/>
    <property type="evidence" value="ECO:0007669"/>
    <property type="project" value="UniProtKB-KW"/>
</dbReference>
<dbReference type="GO" id="GO:0005509">
    <property type="term" value="F:calcium ion binding"/>
    <property type="evidence" value="ECO:0007669"/>
    <property type="project" value="InterPro"/>
</dbReference>
<dbReference type="GO" id="GO:0019900">
    <property type="term" value="F:kinase binding"/>
    <property type="evidence" value="ECO:0007669"/>
    <property type="project" value="InterPro"/>
</dbReference>
<dbReference type="GO" id="GO:0019722">
    <property type="term" value="P:calcium-mediated signaling"/>
    <property type="evidence" value="ECO:0007669"/>
    <property type="project" value="InterPro"/>
</dbReference>
<dbReference type="CDD" id="cd00051">
    <property type="entry name" value="EFh"/>
    <property type="match status" value="1"/>
</dbReference>
<dbReference type="FunFam" id="1.10.238.10:FF:000073">
    <property type="entry name" value="calcineurin B-like protein 3"/>
    <property type="match status" value="1"/>
</dbReference>
<dbReference type="Gene3D" id="1.10.238.10">
    <property type="entry name" value="EF-hand"/>
    <property type="match status" value="1"/>
</dbReference>
<dbReference type="InterPro" id="IPR045198">
    <property type="entry name" value="CNBL1-10"/>
</dbReference>
<dbReference type="InterPro" id="IPR011992">
    <property type="entry name" value="EF-hand-dom_pair"/>
</dbReference>
<dbReference type="InterPro" id="IPR018247">
    <property type="entry name" value="EF_Hand_1_Ca_BS"/>
</dbReference>
<dbReference type="InterPro" id="IPR002048">
    <property type="entry name" value="EF_hand_dom"/>
</dbReference>
<dbReference type="PANTHER" id="PTHR23056">
    <property type="entry name" value="CALCINEURIN B"/>
    <property type="match status" value="1"/>
</dbReference>
<dbReference type="PANTHER" id="PTHR23056:SF44">
    <property type="entry name" value="CALCINEURIN B-LIKE PROTEIN 1"/>
    <property type="match status" value="1"/>
</dbReference>
<dbReference type="Pfam" id="PF13499">
    <property type="entry name" value="EF-hand_7"/>
    <property type="match status" value="1"/>
</dbReference>
<dbReference type="PRINTS" id="PR00450">
    <property type="entry name" value="RECOVERIN"/>
</dbReference>
<dbReference type="SMART" id="SM00054">
    <property type="entry name" value="EFh"/>
    <property type="match status" value="3"/>
</dbReference>
<dbReference type="SUPFAM" id="SSF47473">
    <property type="entry name" value="EF-hand"/>
    <property type="match status" value="1"/>
</dbReference>
<dbReference type="PROSITE" id="PS00018">
    <property type="entry name" value="EF_HAND_1"/>
    <property type="match status" value="2"/>
</dbReference>
<dbReference type="PROSITE" id="PS50222">
    <property type="entry name" value="EF_HAND_2"/>
    <property type="match status" value="3"/>
</dbReference>
<proteinExistence type="evidence at transcript level"/>
<evidence type="ECO:0000250" key="1"/>
<evidence type="ECO:0000255" key="2"/>
<evidence type="ECO:0000255" key="3">
    <source>
        <dbReference type="PROSITE-ProRule" id="PRU00448"/>
    </source>
</evidence>
<evidence type="ECO:0000269" key="4">
    <source>
    </source>
</evidence>
<evidence type="ECO:0000269" key="5">
    <source>
    </source>
</evidence>
<evidence type="ECO:0000305" key="6"/>
<evidence type="ECO:0000312" key="7">
    <source>
        <dbReference type="EMBL" id="EEE51412.1"/>
    </source>
</evidence>
<gene>
    <name type="primary">CBL1</name>
    <name type="ordered locus">Os10g0564800</name>
    <name type="ordered locus">LOC_Os10g41510</name>
    <name evidence="7" type="ORF">OsJ_32489</name>
</gene>
<name>CNBL1_ORYSJ</name>
<feature type="initiator methionine" description="Removed" evidence="2">
    <location>
        <position position="1"/>
    </location>
</feature>
<feature type="chain" id="PRO_0000337764" description="Calcineurin B-like protein 1">
    <location>
        <begin position="2"/>
        <end position="213"/>
    </location>
</feature>
<feature type="domain" description="EF-hand 1" evidence="6">
    <location>
        <begin position="31"/>
        <end position="66"/>
    </location>
</feature>
<feature type="domain" description="EF-hand 2" evidence="3">
    <location>
        <begin position="67"/>
        <end position="102"/>
    </location>
</feature>
<feature type="domain" description="EF-hand 3" evidence="3">
    <location>
        <begin position="104"/>
        <end position="139"/>
    </location>
</feature>
<feature type="domain" description="EF-hand 4" evidence="3">
    <location>
        <begin position="148"/>
        <end position="183"/>
    </location>
</feature>
<feature type="binding site" evidence="3">
    <location>
        <position position="117"/>
    </location>
    <ligand>
        <name>Ca(2+)</name>
        <dbReference type="ChEBI" id="CHEBI:29108"/>
        <label>1</label>
    </ligand>
</feature>
<feature type="binding site" evidence="3">
    <location>
        <position position="119"/>
    </location>
    <ligand>
        <name>Ca(2+)</name>
        <dbReference type="ChEBI" id="CHEBI:29108"/>
        <label>1</label>
    </ligand>
</feature>
<feature type="binding site" evidence="3">
    <location>
        <position position="121"/>
    </location>
    <ligand>
        <name>Ca(2+)</name>
        <dbReference type="ChEBI" id="CHEBI:29108"/>
        <label>1</label>
    </ligand>
</feature>
<feature type="binding site" evidence="3">
    <location>
        <position position="128"/>
    </location>
    <ligand>
        <name>Ca(2+)</name>
        <dbReference type="ChEBI" id="CHEBI:29108"/>
        <label>1</label>
    </ligand>
</feature>
<feature type="binding site" evidence="3">
    <location>
        <position position="161"/>
    </location>
    <ligand>
        <name>Ca(2+)</name>
        <dbReference type="ChEBI" id="CHEBI:29108"/>
        <label>2</label>
    </ligand>
</feature>
<feature type="binding site" evidence="3">
    <location>
        <position position="163"/>
    </location>
    <ligand>
        <name>Ca(2+)</name>
        <dbReference type="ChEBI" id="CHEBI:29108"/>
        <label>2</label>
    </ligand>
</feature>
<feature type="binding site" evidence="3">
    <location>
        <position position="165"/>
    </location>
    <ligand>
        <name>Ca(2+)</name>
        <dbReference type="ChEBI" id="CHEBI:29108"/>
        <label>2</label>
    </ligand>
</feature>
<feature type="binding site" evidence="3">
    <location>
        <position position="167"/>
    </location>
    <ligand>
        <name>Ca(2+)</name>
        <dbReference type="ChEBI" id="CHEBI:29108"/>
        <label>2</label>
    </ligand>
</feature>
<feature type="binding site" evidence="3">
    <location>
        <position position="172"/>
    </location>
    <ligand>
        <name>Ca(2+)</name>
        <dbReference type="ChEBI" id="CHEBI:29108"/>
        <label>2</label>
    </ligand>
</feature>
<feature type="site" description="Involved in dimerization" evidence="1">
    <location>
        <position position="140"/>
    </location>
</feature>
<feature type="lipid moiety-binding region" description="N-myristoyl glycine" evidence="2">
    <location>
        <position position="2"/>
    </location>
</feature>
<feature type="sequence conflict" description="In Ref. 1; ABA54176." evidence="6" ref="1">
    <original>Q</original>
    <variation>R</variation>
    <location>
        <position position="58"/>
    </location>
</feature>
<keyword id="KW-0106">Calcium</keyword>
<keyword id="KW-0449">Lipoprotein</keyword>
<keyword id="KW-0472">Membrane</keyword>
<keyword id="KW-0479">Metal-binding</keyword>
<keyword id="KW-0519">Myristate</keyword>
<keyword id="KW-1185">Reference proteome</keyword>
<keyword id="KW-0677">Repeat</keyword>
<keyword id="KW-0926">Vacuole</keyword>
<protein>
    <recommendedName>
        <fullName>Calcineurin B-like protein 1</fullName>
    </recommendedName>
</protein>